<reference key="1">
    <citation type="journal article" date="2004" name="FEBS Lett.">
        <title>Structural determinants of the selectivity of KTS-disintegrins for the alpha1beta1 integrin.</title>
        <authorList>
            <person name="Kisiel D.G."/>
            <person name="Calvete J.J."/>
            <person name="Katzhendler J."/>
            <person name="Fertala A."/>
            <person name="Lazarovici P."/>
            <person name="Marcinkiewicz C."/>
        </authorList>
    </citation>
    <scope>PROTEIN SEQUENCE</scope>
    <scope>FUNCTION</scope>
    <scope>SYNTHESIS OF 19-29</scope>
    <scope>MUTAGENESIS OF ARG-24</scope>
    <scope>MASS SPECTROMETRY</scope>
    <source>
        <tissue>Venom</tissue>
    </source>
</reference>
<reference key="2">
    <citation type="journal article" date="2009" name="Cancer Biol. Ther.">
        <title>Effect of VP12 and viperistatin on inhibition of collagen-receptor-dependent melanoma metastasis.</title>
        <authorList>
            <person name="Staniszewska I."/>
            <person name="Walsh E.M."/>
            <person name="Rothman V.L."/>
            <person name="Gaathon A."/>
            <person name="Tuszynski G.P."/>
            <person name="Calvete J.J."/>
            <person name="Lazarovici P."/>
            <person name="Marcinkiewicz C."/>
        </authorList>
    </citation>
    <scope>FUNCTION</scope>
</reference>
<name>DIS_DABPA</name>
<keyword id="KW-1217">Cell adhesion impairing toxin</keyword>
<keyword id="KW-0903">Direct protein sequencing</keyword>
<keyword id="KW-1015">Disulfide bond</keyword>
<keyword id="KW-0964">Secreted</keyword>
<keyword id="KW-0800">Toxin</keyword>
<sequence>CTTGPCCRQCKLKPAGTTCWKTSRTSHYCTGKSCDCPVYQG</sequence>
<accession>P0C6E2</accession>
<protein>
    <recommendedName>
        <fullName evidence="5 6">Disintegrin viperistatin</fullName>
    </recommendedName>
</protein>
<feature type="chain" id="PRO_0000321884" description="Disintegrin viperistatin" evidence="3">
    <location>
        <begin position="1"/>
        <end position="41"/>
    </location>
</feature>
<feature type="domain" description="Disintegrin">
    <location>
        <begin position="1"/>
        <end position="41"/>
    </location>
</feature>
<feature type="short sequence motif" description="Cell attachment site; atypical (KTS)">
    <location>
        <begin position="21"/>
        <end position="23"/>
    </location>
</feature>
<feature type="disulfide bond" evidence="2">
    <location>
        <begin position="1"/>
        <end position="10"/>
    </location>
</feature>
<feature type="disulfide bond" evidence="2">
    <location>
        <begin position="6"/>
        <end position="29"/>
    </location>
</feature>
<feature type="disulfide bond" evidence="2">
    <location>
        <begin position="7"/>
        <end position="34"/>
    </location>
</feature>
<feature type="disulfide bond" evidence="2">
    <location>
        <begin position="19"/>
        <end position="36"/>
    </location>
</feature>
<feature type="mutagenesis site" description="Decrease in inhibitory activity towards alpha-1/beta-1 integrin." evidence="3">
    <original>R</original>
    <variation>L</variation>
    <location>
        <position position="24"/>
    </location>
</feature>
<organism>
    <name type="scientific">Daboia palaestinae</name>
    <name type="common">Palestine viper</name>
    <name type="synonym">Vipera palaestinae</name>
    <dbReference type="NCBI Taxonomy" id="1170828"/>
    <lineage>
        <taxon>Eukaryota</taxon>
        <taxon>Metazoa</taxon>
        <taxon>Chordata</taxon>
        <taxon>Craniata</taxon>
        <taxon>Vertebrata</taxon>
        <taxon>Euteleostomi</taxon>
        <taxon>Lepidosauria</taxon>
        <taxon>Squamata</taxon>
        <taxon>Bifurcata</taxon>
        <taxon>Unidentata</taxon>
        <taxon>Episquamata</taxon>
        <taxon>Toxicofera</taxon>
        <taxon>Serpentes</taxon>
        <taxon>Colubroidea</taxon>
        <taxon>Viperidae</taxon>
        <taxon>Viperinae</taxon>
        <taxon>Daboia</taxon>
    </lineage>
</organism>
<evidence type="ECO:0000250" key="1"/>
<evidence type="ECO:0000250" key="2">
    <source>
        <dbReference type="UniProtKB" id="Q7ZZM2"/>
    </source>
</evidence>
<evidence type="ECO:0000269" key="3">
    <source>
    </source>
</evidence>
<evidence type="ECO:0000269" key="4">
    <source>
    </source>
</evidence>
<evidence type="ECO:0000303" key="5">
    <source>
    </source>
</evidence>
<evidence type="ECO:0000303" key="6">
    <source>
    </source>
</evidence>
<evidence type="ECO:0000305" key="7"/>
<proteinExistence type="evidence at protein level"/>
<comment type="function">
    <text evidence="3 4">Potent and highly selective inhibitor of alpha-1/beta-1 (ITGA1/ITGB1) integrin binding to collagen I and IV. Is about 25-fold more potent than obtustatin inhibiting the binding of this integrin to collagen IV.</text>
</comment>
<comment type="subunit">
    <text evidence="1">Monomer.</text>
</comment>
<comment type="subcellular location">
    <subcellularLocation>
        <location>Secreted</location>
    </subcellularLocation>
</comment>
<comment type="tissue specificity">
    <text>Expressed by the venom gland.</text>
</comment>
<comment type="mass spectrometry"/>
<comment type="similarity">
    <text evidence="7">Belongs to the disintegrin family. Short disintegrin subfamily.</text>
</comment>
<dbReference type="SMR" id="P0C6E2"/>
<dbReference type="GO" id="GO:0005576">
    <property type="term" value="C:extracellular region"/>
    <property type="evidence" value="ECO:0007669"/>
    <property type="project" value="UniProtKB-SubCell"/>
</dbReference>
<dbReference type="GO" id="GO:0090729">
    <property type="term" value="F:toxin activity"/>
    <property type="evidence" value="ECO:0007669"/>
    <property type="project" value="UniProtKB-KW"/>
</dbReference>
<dbReference type="Gene3D" id="4.10.70.10">
    <property type="entry name" value="Disintegrin domain"/>
    <property type="match status" value="1"/>
</dbReference>
<dbReference type="InterPro" id="IPR001762">
    <property type="entry name" value="Disintegrin_dom"/>
</dbReference>
<dbReference type="InterPro" id="IPR036436">
    <property type="entry name" value="Disintegrin_dom_sf"/>
</dbReference>
<dbReference type="PRINTS" id="PR00289">
    <property type="entry name" value="DISINTEGRIN"/>
</dbReference>
<dbReference type="SUPFAM" id="SSF57552">
    <property type="entry name" value="Blood coagulation inhibitor (disintegrin)"/>
    <property type="match status" value="1"/>
</dbReference>